<dbReference type="EC" id="2.7.2.11" evidence="1"/>
<dbReference type="EMBL" id="CP000668">
    <property type="protein sequence ID" value="ABP41213.1"/>
    <property type="molecule type" value="Genomic_DNA"/>
</dbReference>
<dbReference type="RefSeq" id="WP_002208701.1">
    <property type="nucleotide sequence ID" value="NZ_CP009715.1"/>
</dbReference>
<dbReference type="SMR" id="A4TPK1"/>
<dbReference type="GeneID" id="57975496"/>
<dbReference type="KEGG" id="ypp:YPDSF_2851"/>
<dbReference type="PATRIC" id="fig|386656.14.peg.113"/>
<dbReference type="UniPathway" id="UPA00098">
    <property type="reaction ID" value="UER00359"/>
</dbReference>
<dbReference type="GO" id="GO:0005829">
    <property type="term" value="C:cytosol"/>
    <property type="evidence" value="ECO:0007669"/>
    <property type="project" value="TreeGrafter"/>
</dbReference>
<dbReference type="GO" id="GO:0005524">
    <property type="term" value="F:ATP binding"/>
    <property type="evidence" value="ECO:0007669"/>
    <property type="project" value="UniProtKB-KW"/>
</dbReference>
<dbReference type="GO" id="GO:0004349">
    <property type="term" value="F:glutamate 5-kinase activity"/>
    <property type="evidence" value="ECO:0007669"/>
    <property type="project" value="UniProtKB-UniRule"/>
</dbReference>
<dbReference type="GO" id="GO:0003723">
    <property type="term" value="F:RNA binding"/>
    <property type="evidence" value="ECO:0007669"/>
    <property type="project" value="InterPro"/>
</dbReference>
<dbReference type="GO" id="GO:0055129">
    <property type="term" value="P:L-proline biosynthetic process"/>
    <property type="evidence" value="ECO:0007669"/>
    <property type="project" value="UniProtKB-UniRule"/>
</dbReference>
<dbReference type="CDD" id="cd04242">
    <property type="entry name" value="AAK_G5K_ProB"/>
    <property type="match status" value="1"/>
</dbReference>
<dbReference type="CDD" id="cd21157">
    <property type="entry name" value="PUA_G5K"/>
    <property type="match status" value="1"/>
</dbReference>
<dbReference type="FunFam" id="2.30.130.10:FF:000003">
    <property type="entry name" value="Glutamate 5-kinase"/>
    <property type="match status" value="1"/>
</dbReference>
<dbReference type="FunFam" id="3.40.1160.10:FF:000006">
    <property type="entry name" value="Glutamate 5-kinase"/>
    <property type="match status" value="1"/>
</dbReference>
<dbReference type="Gene3D" id="3.40.1160.10">
    <property type="entry name" value="Acetylglutamate kinase-like"/>
    <property type="match status" value="2"/>
</dbReference>
<dbReference type="Gene3D" id="2.30.130.10">
    <property type="entry name" value="PUA domain"/>
    <property type="match status" value="1"/>
</dbReference>
<dbReference type="HAMAP" id="MF_00456">
    <property type="entry name" value="ProB"/>
    <property type="match status" value="1"/>
</dbReference>
<dbReference type="InterPro" id="IPR036393">
    <property type="entry name" value="AceGlu_kinase-like_sf"/>
</dbReference>
<dbReference type="InterPro" id="IPR001048">
    <property type="entry name" value="Asp/Glu/Uridylate_kinase"/>
</dbReference>
<dbReference type="InterPro" id="IPR041739">
    <property type="entry name" value="G5K_ProB"/>
</dbReference>
<dbReference type="InterPro" id="IPR001057">
    <property type="entry name" value="Glu/AcGlu_kinase"/>
</dbReference>
<dbReference type="InterPro" id="IPR011529">
    <property type="entry name" value="Glu_5kinase"/>
</dbReference>
<dbReference type="InterPro" id="IPR005715">
    <property type="entry name" value="Glu_5kinase/COase_Synthase"/>
</dbReference>
<dbReference type="InterPro" id="IPR019797">
    <property type="entry name" value="Glutamate_5-kinase_CS"/>
</dbReference>
<dbReference type="InterPro" id="IPR002478">
    <property type="entry name" value="PUA"/>
</dbReference>
<dbReference type="InterPro" id="IPR015947">
    <property type="entry name" value="PUA-like_sf"/>
</dbReference>
<dbReference type="InterPro" id="IPR036974">
    <property type="entry name" value="PUA_sf"/>
</dbReference>
<dbReference type="NCBIfam" id="TIGR01027">
    <property type="entry name" value="proB"/>
    <property type="match status" value="1"/>
</dbReference>
<dbReference type="PANTHER" id="PTHR43654">
    <property type="entry name" value="GLUTAMATE 5-KINASE"/>
    <property type="match status" value="1"/>
</dbReference>
<dbReference type="PANTHER" id="PTHR43654:SF1">
    <property type="entry name" value="ISOPENTENYL PHOSPHATE KINASE"/>
    <property type="match status" value="1"/>
</dbReference>
<dbReference type="Pfam" id="PF00696">
    <property type="entry name" value="AA_kinase"/>
    <property type="match status" value="1"/>
</dbReference>
<dbReference type="Pfam" id="PF01472">
    <property type="entry name" value="PUA"/>
    <property type="match status" value="1"/>
</dbReference>
<dbReference type="PIRSF" id="PIRSF000729">
    <property type="entry name" value="GK"/>
    <property type="match status" value="1"/>
</dbReference>
<dbReference type="PRINTS" id="PR00474">
    <property type="entry name" value="GLU5KINASE"/>
</dbReference>
<dbReference type="SMART" id="SM00359">
    <property type="entry name" value="PUA"/>
    <property type="match status" value="1"/>
</dbReference>
<dbReference type="SUPFAM" id="SSF53633">
    <property type="entry name" value="Carbamate kinase-like"/>
    <property type="match status" value="1"/>
</dbReference>
<dbReference type="SUPFAM" id="SSF88697">
    <property type="entry name" value="PUA domain-like"/>
    <property type="match status" value="1"/>
</dbReference>
<dbReference type="PROSITE" id="PS00902">
    <property type="entry name" value="GLUTAMATE_5_KINASE"/>
    <property type="match status" value="1"/>
</dbReference>
<dbReference type="PROSITE" id="PS50890">
    <property type="entry name" value="PUA"/>
    <property type="match status" value="1"/>
</dbReference>
<sequence length="367" mass="39291">MSGSQTLVVKLGTSVLTGGSRRLNRAHIVELVRQCAQQHAKGHRIVIVTSGAIAAGREHLGYPELPATIASKQLLAAVGQSRLIQLWEQLFSIYGIHIGQMLLTRADLEDRERFLNARDTMNALLDNRIVPVINENDAVATAEIKVGDNDNLSALAAILASADKLLLLTDQAGLYTADPRNNPEAELIREVHGIDDVLRGMAGDSVSGLGTGGMATKLQAADVACRAGIDVVIAAGSQVGVIADVIDGTPVGTRFHSLETPLENRKRWIFGAPPAGEITVDDGAVFAIMERGSSLLPKGIRSVKGDFSRGEVIRIRNLNGRDLAHGVSRYNSDALRMLAGHHSQQISEILGYEYGPVAVHRDDMIVS</sequence>
<proteinExistence type="inferred from homology"/>
<protein>
    <recommendedName>
        <fullName evidence="1">Glutamate 5-kinase</fullName>
        <ecNumber evidence="1">2.7.2.11</ecNumber>
    </recommendedName>
    <alternativeName>
        <fullName evidence="1">Gamma-glutamyl kinase</fullName>
        <shortName evidence="1">GK</shortName>
    </alternativeName>
</protein>
<name>PROB_YERPP</name>
<feature type="chain" id="PRO_1000081120" description="Glutamate 5-kinase">
    <location>
        <begin position="1"/>
        <end position="367"/>
    </location>
</feature>
<feature type="domain" description="PUA" evidence="1">
    <location>
        <begin position="275"/>
        <end position="353"/>
    </location>
</feature>
<feature type="binding site" evidence="1">
    <location>
        <position position="10"/>
    </location>
    <ligand>
        <name>ATP</name>
        <dbReference type="ChEBI" id="CHEBI:30616"/>
    </ligand>
</feature>
<feature type="binding site" evidence="1">
    <location>
        <position position="50"/>
    </location>
    <ligand>
        <name>substrate</name>
    </ligand>
</feature>
<feature type="binding site" evidence="1">
    <location>
        <position position="137"/>
    </location>
    <ligand>
        <name>substrate</name>
    </ligand>
</feature>
<feature type="binding site" evidence="1">
    <location>
        <position position="149"/>
    </location>
    <ligand>
        <name>substrate</name>
    </ligand>
</feature>
<feature type="binding site" evidence="1">
    <location>
        <begin position="169"/>
        <end position="170"/>
    </location>
    <ligand>
        <name>ATP</name>
        <dbReference type="ChEBI" id="CHEBI:30616"/>
    </ligand>
</feature>
<feature type="binding site" evidence="1">
    <location>
        <begin position="211"/>
        <end position="217"/>
    </location>
    <ligand>
        <name>ATP</name>
        <dbReference type="ChEBI" id="CHEBI:30616"/>
    </ligand>
</feature>
<accession>A4TPK1</accession>
<gene>
    <name evidence="1" type="primary">proB</name>
    <name type="ordered locus">YPDSF_2851</name>
</gene>
<evidence type="ECO:0000255" key="1">
    <source>
        <dbReference type="HAMAP-Rule" id="MF_00456"/>
    </source>
</evidence>
<comment type="function">
    <text evidence="1">Catalyzes the transfer of a phosphate group to glutamate to form L-glutamate 5-phosphate.</text>
</comment>
<comment type="catalytic activity">
    <reaction evidence="1">
        <text>L-glutamate + ATP = L-glutamyl 5-phosphate + ADP</text>
        <dbReference type="Rhea" id="RHEA:14877"/>
        <dbReference type="ChEBI" id="CHEBI:29985"/>
        <dbReference type="ChEBI" id="CHEBI:30616"/>
        <dbReference type="ChEBI" id="CHEBI:58274"/>
        <dbReference type="ChEBI" id="CHEBI:456216"/>
        <dbReference type="EC" id="2.7.2.11"/>
    </reaction>
</comment>
<comment type="pathway">
    <text evidence="1">Amino-acid biosynthesis; L-proline biosynthesis; L-glutamate 5-semialdehyde from L-glutamate: step 1/2.</text>
</comment>
<comment type="subcellular location">
    <subcellularLocation>
        <location evidence="1">Cytoplasm</location>
    </subcellularLocation>
</comment>
<comment type="similarity">
    <text evidence="1">Belongs to the glutamate 5-kinase family.</text>
</comment>
<keyword id="KW-0028">Amino-acid biosynthesis</keyword>
<keyword id="KW-0067">ATP-binding</keyword>
<keyword id="KW-0963">Cytoplasm</keyword>
<keyword id="KW-0418">Kinase</keyword>
<keyword id="KW-0547">Nucleotide-binding</keyword>
<keyword id="KW-0641">Proline biosynthesis</keyword>
<keyword id="KW-0808">Transferase</keyword>
<reference key="1">
    <citation type="submission" date="2007-02" db="EMBL/GenBank/DDBJ databases">
        <title>Complete sequence of chromosome of Yersinia pestis Pestoides F.</title>
        <authorList>
            <consortium name="US DOE Joint Genome Institute"/>
            <person name="Copeland A."/>
            <person name="Lucas S."/>
            <person name="Lapidus A."/>
            <person name="Barry K."/>
            <person name="Detter J.C."/>
            <person name="Glavina del Rio T."/>
            <person name="Hammon N."/>
            <person name="Israni S."/>
            <person name="Dalin E."/>
            <person name="Tice H."/>
            <person name="Pitluck S."/>
            <person name="Di Bartolo G."/>
            <person name="Chain P."/>
            <person name="Malfatti S."/>
            <person name="Shin M."/>
            <person name="Vergez L."/>
            <person name="Schmutz J."/>
            <person name="Larimer F."/>
            <person name="Land M."/>
            <person name="Hauser L."/>
            <person name="Worsham P."/>
            <person name="Chu M."/>
            <person name="Bearden S."/>
            <person name="Garcia E."/>
            <person name="Richardson P."/>
        </authorList>
    </citation>
    <scope>NUCLEOTIDE SEQUENCE [LARGE SCALE GENOMIC DNA]</scope>
    <source>
        <strain>Pestoides F</strain>
    </source>
</reference>
<organism>
    <name type="scientific">Yersinia pestis (strain Pestoides F)</name>
    <dbReference type="NCBI Taxonomy" id="386656"/>
    <lineage>
        <taxon>Bacteria</taxon>
        <taxon>Pseudomonadati</taxon>
        <taxon>Pseudomonadota</taxon>
        <taxon>Gammaproteobacteria</taxon>
        <taxon>Enterobacterales</taxon>
        <taxon>Yersiniaceae</taxon>
        <taxon>Yersinia</taxon>
    </lineage>
</organism>